<dbReference type="EMBL" id="AP009374">
    <property type="protein sequence ID" value="BAF50504.1"/>
    <property type="molecule type" value="Genomic_DNA"/>
</dbReference>
<dbReference type="EMBL" id="AP009374">
    <property type="protein sequence ID" value="BAF50527.1"/>
    <property type="molecule type" value="Genomic_DNA"/>
</dbReference>
<dbReference type="GO" id="GO:0009570">
    <property type="term" value="C:chloroplast stroma"/>
    <property type="evidence" value="ECO:0007669"/>
    <property type="project" value="UniProtKB-SubCell"/>
</dbReference>
<dbReference type="GO" id="GO:0005524">
    <property type="term" value="F:ATP binding"/>
    <property type="evidence" value="ECO:0007669"/>
    <property type="project" value="UniProtKB-KW"/>
</dbReference>
<dbReference type="GO" id="GO:0016887">
    <property type="term" value="F:ATP hydrolysis activity"/>
    <property type="evidence" value="ECO:0007669"/>
    <property type="project" value="InterPro"/>
</dbReference>
<dbReference type="CDD" id="cd19505">
    <property type="entry name" value="RecA-like_Ycf2"/>
    <property type="match status" value="1"/>
</dbReference>
<dbReference type="Gene3D" id="3.40.50.300">
    <property type="entry name" value="P-loop containing nucleotide triphosphate hydrolases"/>
    <property type="match status" value="1"/>
</dbReference>
<dbReference type="HAMAP" id="MF_01330">
    <property type="entry name" value="Ycf2"/>
    <property type="match status" value="1"/>
</dbReference>
<dbReference type="InterPro" id="IPR003593">
    <property type="entry name" value="AAA+_ATPase"/>
</dbReference>
<dbReference type="InterPro" id="IPR003959">
    <property type="entry name" value="ATPase_AAA_core"/>
</dbReference>
<dbReference type="InterPro" id="IPR027417">
    <property type="entry name" value="P-loop_NTPase"/>
</dbReference>
<dbReference type="InterPro" id="IPR008543">
    <property type="entry name" value="Uncharacterised_Ycf2"/>
</dbReference>
<dbReference type="InterPro" id="IPR056777">
    <property type="entry name" value="Ycf2_N"/>
</dbReference>
<dbReference type="PANTHER" id="PTHR33078:SF89">
    <property type="entry name" value="PROTEIN YCF2"/>
    <property type="match status" value="1"/>
</dbReference>
<dbReference type="PANTHER" id="PTHR33078">
    <property type="entry name" value="PROTEIN YCF2-RELATED"/>
    <property type="match status" value="1"/>
</dbReference>
<dbReference type="Pfam" id="PF00004">
    <property type="entry name" value="AAA"/>
    <property type="match status" value="1"/>
</dbReference>
<dbReference type="Pfam" id="PF05695">
    <property type="entry name" value="Ycf2"/>
    <property type="match status" value="1"/>
</dbReference>
<dbReference type="SMART" id="SM00382">
    <property type="entry name" value="AAA"/>
    <property type="match status" value="1"/>
</dbReference>
<dbReference type="SUPFAM" id="SSF52540">
    <property type="entry name" value="P-loop containing nucleoside triphosphate hydrolases"/>
    <property type="match status" value="1"/>
</dbReference>
<organism>
    <name type="scientific">Lepidium virginicum</name>
    <name type="common">Virginia pepperweed</name>
    <dbReference type="NCBI Taxonomy" id="59292"/>
    <lineage>
        <taxon>Eukaryota</taxon>
        <taxon>Viridiplantae</taxon>
        <taxon>Streptophyta</taxon>
        <taxon>Embryophyta</taxon>
        <taxon>Tracheophyta</taxon>
        <taxon>Spermatophyta</taxon>
        <taxon>Magnoliopsida</taxon>
        <taxon>eudicotyledons</taxon>
        <taxon>Gunneridae</taxon>
        <taxon>Pentapetalae</taxon>
        <taxon>rosids</taxon>
        <taxon>malvids</taxon>
        <taxon>Brassicales</taxon>
        <taxon>Brassicaceae</taxon>
        <taxon>Lepidieae</taxon>
        <taxon>Lepidium</taxon>
    </lineage>
</organism>
<evidence type="ECO:0000255" key="1">
    <source>
        <dbReference type="HAMAP-Rule" id="MF_01330"/>
    </source>
</evidence>
<comment type="function">
    <text evidence="1">Probable ATPase of unknown function. Its presence in a non-photosynthetic plant (Epifagus virginiana) and experiments in tobacco indicate that it has an essential function which is probably not related to photosynthesis.</text>
</comment>
<comment type="subcellular location">
    <subcellularLocation>
        <location evidence="1">Plastid</location>
        <location evidence="1">Chloroplast stroma</location>
    </subcellularLocation>
</comment>
<comment type="similarity">
    <text evidence="1">Belongs to the Ycf2 family.</text>
</comment>
<keyword id="KW-0067">ATP-binding</keyword>
<keyword id="KW-0150">Chloroplast</keyword>
<keyword id="KW-0547">Nucleotide-binding</keyword>
<keyword id="KW-0934">Plastid</keyword>
<protein>
    <recommendedName>
        <fullName evidence="1">Protein Ycf2</fullName>
    </recommendedName>
</protein>
<proteinExistence type="inferred from homology"/>
<feature type="chain" id="PRO_0000343777" description="Protein Ycf2">
    <location>
        <begin position="1"/>
        <end position="2287"/>
    </location>
</feature>
<feature type="binding site" evidence="1">
    <location>
        <begin position="1641"/>
        <end position="1648"/>
    </location>
    <ligand>
        <name>ATP</name>
        <dbReference type="ChEBI" id="CHEBI:30616"/>
    </ligand>
</feature>
<geneLocation type="chloroplast"/>
<reference key="1">
    <citation type="submission" date="2007-03" db="EMBL/GenBank/DDBJ databases">
        <title>Sequencing analysis of Lepidium virginicum JO26 chloroplast DNA.</title>
        <authorList>
            <person name="Hosouchi T."/>
            <person name="Tsuruoka H."/>
            <person name="Kotani H."/>
        </authorList>
    </citation>
    <scope>NUCLEOTIDE SEQUENCE</scope>
    <source>
        <strain>JO26</strain>
    </source>
</reference>
<sequence length="2287" mass="269002">MKGHQFKSWIFELREIVREIKNSHYFLDSWTQFNSVGSFIHIFFHQERFRKLLDPRIFSILLLRNSQGSTSNRYFTIKGVVLFVVAALLYRINNRNMVESKNLYLKGLLPIPMNSIGPRNDTSEESFGSSNINRLIVSLLYLTKGKKISESCFRDPKESTWVLPITKKCIMPESNWSSRWWRNWIGKKRDFWCKISNETVAGIDISFKEKDIKYLEFLFVYYMDDPIRKGHDWELFDRLSPSKRRNIINLNSGQLFEILVKDWICYLMFAFREKIPIEVEGFFKQQGAGSTIQSNDIEHVSHLFSRNKWAISLQNCAQFHMWQFHQDLFVSWGKSPHESDFLRKISRENWIWLDNVWLVNKDRFFSKVRNVSSNIQYDSTRSSFVQVTDSSQLNGSSDQFIDPFDSISNEYSEYHYHTLINQREIQQLKERSILWDPSFIQTEGREIESDRFPKYLSGYSSMPRLFTEREKRMNNHLLPEESEEFLGNSTRAIRSFFSDRWSELHLGSNPTERSTRDQKLLKKEQDVSFVPSRRSENKEIVNIFKIITYLQNTVSIHPISSDLGCDMVPKDELDMDSSNKISFLNKNPFFDLFHLFHERKRGGYTLRHDFESEERFQEMADLFTLSITEPDLVYHKGFAFSIDSYGLDQRQFLKEVFNSRDESKKKSLLVLPPIFYEENESFYRRIRKNWVRISCGNYLEDPKRVVFASNNIMEAVNQYRLIRNLIQIQFQYSPYGYIRNVLNRFFLMKRPDRNFEYGIQRDLIGNDTLNHRMKDTINQHLSNLKKSQKKWFDPLIFLSRTERSINRDPNAYRYKWSNGSKNFQEHLEHFVSERKSRFQVVFDRLCINQYSIDWSEVIDKKDLSKSLRFFLSKLLRFFLSKLLLFLSKLLLFLSNSLPFFFVSFENIPIHRSEIHIYELKGPNDQLCNQLLESIGLQIVHLKKLKPFLLDDHNTSQKSKFLINGGTISPFLFNKIPKWMIDSFHTRKNRGKSFDNTDSYFSIVSHDQDNWLNPVKPFQRSSLISSFSKANRLRFLNNPHHFCFYCNKRFPFYVEKARLNNSDFTYGQFLTILFIHNKIFSSCGGKKKHEHAFLERDTISPSSIESQVSNIFISNDFPQSGDERYNLYKSFHFPIRSDPLVRRAIYSIADISGTPLIEGQRVNFERTYCQTLSDMNLSDSEEKSLHQYLNFNSNMGLIHTPCSEKYLQRKKRSLCLKKCVDKGQMDRTFQRDSAFSTLSKWNLFQTYMPWFFTSTGYKYLNLIFLDTFSDLLRILSSSQKFVSIFHDIMHGLDISWRILQKKLCLPQRNPISEISSKSLHNLLLSEEMIHRNNESSLISTHLRSPNVREVLYSILFLLLVAGYIVRTHLLFVSRAYSELQTEFEKIKSLMIPSYMIELRKLLDRYPTSELNSFWLKNLFLVALEQLGDCLEEIRGSGGNMLWGGDPARSKKKDLKINFIDIIDLISIIPNPINRITFSRNTRHLSHTSKEIYSLIRKRKNVSGDWIDDKIESWVANSDSIDDKEREFLVQFSTLRAEKRIDQILLSLTHSDHLSKNDSGYQMIEQPGTIYLRYLVDIHKKYLMNYEFNTSCLAERRIFLAHYQTITYSQTSCGANSFHFPSHGKPFSLRLALSPSRSILVIGSIGTGRSYLVKYLATNSYVPFITVFLNKFLDNKPKGFFIDDIDIDDSDDIDASNDIDRELDTELELLTMMNALTMDMMSEIDRFYITLQFELAKAMSPCIIWIPNIHDLDVNESNYLALGLLVNSLSRDCERCSTRNILVIASTHIPQKVDPALIAPNKLNTCIKIRRLLIPQQRKHFFTLSYTRGFHLEKKMFHTNGFESITMGSSARDLVALTNEALSISITQKKSIIDTNTIRSALHRQTWDLRSQVRSVQDHGILFYQIGRAVAQNVLISNCPIDPISIYMKKKSCNEGDSYLYKWYFELGTSMKKFTILLYLLSCSAGSVAQDLWSLPGPDEKNRITSYGFIENDSDLVHGLLEVQGALVGSSRTEKDCSQFDNDRVTLLFRSEPRDPLYMMQDGSCSIVDQRFLYEKYESEFEEGEGEGVLDPQQIEEDLFNHIVWAPRIWRPRGFLFDCIERPNELGFPYLAGSFRGKRIIYDEKYELQENDSEFLQSGTMQYQRRDRSSKEQGFFRISQFIWDPADPLFFLFKDQPFVSVFSHREFFADEEMSKGLLTSQTDPPTSIYKRWFIKNTQEKHFELLIQRQRWLRTNSSLSNGFFRSNTRSESYQYLSNLFLSNGTLLDRMTKTLLKKRWLFPDEMKIGFM</sequence>
<name>YCF2_LEPVR</name>
<gene>
    <name evidence="1" type="primary">ycf2-A</name>
</gene>
<gene>
    <name evidence="1" type="primary">ycf2-B</name>
</gene>
<accession>A4QLE9</accession>